<proteinExistence type="inferred from homology"/>
<gene>
    <name evidence="1" type="primary">argG</name>
    <name type="ordered locus">NATL1_21901</name>
</gene>
<name>ASSY_PROM1</name>
<sequence length="400" mass="44133">MGKAKKVVLAYSGGVDTSVCIPYLKKEYGVEHVIAFAADLGQGDELDQIKQKAISAGASESLIGNLVKPFIEDFAFPAIRSNALYQGRYPLSTALARPLIAKNLVEIARELNADGVAHGCTGKGNDQVRFDVTIGALAPDLQLLTPAREWGMSREETIAYGEKYGIVPPVSKKTPYSIDLNLLGRSIEAGPLEDPFEMPSEEVFGITSSIADSPNEPEIVDILFENGYPVAINGEAMEPVSLIKKANSLAGKHGFGRLDIIEDRVVGIKSREIYETPGLLLLIKAHQEIESLTLPADLLDTKFRLERQWADLVYKGFWFSPLKEALDGFINYSQKQVNGTVRVRLFKGNVDVIGRKSKENSLYISDMSTYGSEDKFNHKSAEGFIYVWGLPSRIWSWINK</sequence>
<protein>
    <recommendedName>
        <fullName evidence="1">Argininosuccinate synthase</fullName>
        <ecNumber evidence="1">6.3.4.5</ecNumber>
    </recommendedName>
    <alternativeName>
        <fullName evidence="1">Citrulline--aspartate ligase</fullName>
    </alternativeName>
</protein>
<comment type="catalytic activity">
    <reaction evidence="1">
        <text>L-citrulline + L-aspartate + ATP = 2-(N(omega)-L-arginino)succinate + AMP + diphosphate + H(+)</text>
        <dbReference type="Rhea" id="RHEA:10932"/>
        <dbReference type="ChEBI" id="CHEBI:15378"/>
        <dbReference type="ChEBI" id="CHEBI:29991"/>
        <dbReference type="ChEBI" id="CHEBI:30616"/>
        <dbReference type="ChEBI" id="CHEBI:33019"/>
        <dbReference type="ChEBI" id="CHEBI:57472"/>
        <dbReference type="ChEBI" id="CHEBI:57743"/>
        <dbReference type="ChEBI" id="CHEBI:456215"/>
        <dbReference type="EC" id="6.3.4.5"/>
    </reaction>
</comment>
<comment type="pathway">
    <text evidence="1">Amino-acid biosynthesis; L-arginine biosynthesis; L-arginine from L-ornithine and carbamoyl phosphate: step 2/3.</text>
</comment>
<comment type="subunit">
    <text evidence="1">Homotetramer.</text>
</comment>
<comment type="subcellular location">
    <subcellularLocation>
        <location evidence="1">Cytoplasm</location>
    </subcellularLocation>
</comment>
<comment type="similarity">
    <text evidence="1">Belongs to the argininosuccinate synthase family. Type 1 subfamily.</text>
</comment>
<dbReference type="EC" id="6.3.4.5" evidence="1"/>
<dbReference type="EMBL" id="CP000553">
    <property type="protein sequence ID" value="ABM76746.1"/>
    <property type="molecule type" value="Genomic_DNA"/>
</dbReference>
<dbReference type="RefSeq" id="WP_011824680.1">
    <property type="nucleotide sequence ID" value="NC_008819.1"/>
</dbReference>
<dbReference type="SMR" id="A2C5I6"/>
<dbReference type="KEGG" id="pme:NATL1_21901"/>
<dbReference type="eggNOG" id="COG0137">
    <property type="taxonomic scope" value="Bacteria"/>
</dbReference>
<dbReference type="HOGENOM" id="CLU_032784_4_2_3"/>
<dbReference type="UniPathway" id="UPA00068">
    <property type="reaction ID" value="UER00113"/>
</dbReference>
<dbReference type="Proteomes" id="UP000002592">
    <property type="component" value="Chromosome"/>
</dbReference>
<dbReference type="GO" id="GO:0005737">
    <property type="term" value="C:cytoplasm"/>
    <property type="evidence" value="ECO:0007669"/>
    <property type="project" value="UniProtKB-SubCell"/>
</dbReference>
<dbReference type="GO" id="GO:0004055">
    <property type="term" value="F:argininosuccinate synthase activity"/>
    <property type="evidence" value="ECO:0007669"/>
    <property type="project" value="UniProtKB-UniRule"/>
</dbReference>
<dbReference type="GO" id="GO:0005524">
    <property type="term" value="F:ATP binding"/>
    <property type="evidence" value="ECO:0007669"/>
    <property type="project" value="UniProtKB-UniRule"/>
</dbReference>
<dbReference type="GO" id="GO:0000053">
    <property type="term" value="P:argininosuccinate metabolic process"/>
    <property type="evidence" value="ECO:0007669"/>
    <property type="project" value="TreeGrafter"/>
</dbReference>
<dbReference type="GO" id="GO:0006526">
    <property type="term" value="P:L-arginine biosynthetic process"/>
    <property type="evidence" value="ECO:0007669"/>
    <property type="project" value="UniProtKB-UniRule"/>
</dbReference>
<dbReference type="GO" id="GO:0000050">
    <property type="term" value="P:urea cycle"/>
    <property type="evidence" value="ECO:0007669"/>
    <property type="project" value="TreeGrafter"/>
</dbReference>
<dbReference type="CDD" id="cd01999">
    <property type="entry name" value="ASS"/>
    <property type="match status" value="1"/>
</dbReference>
<dbReference type="FunFam" id="3.40.50.620:FF:000019">
    <property type="entry name" value="Argininosuccinate synthase"/>
    <property type="match status" value="1"/>
</dbReference>
<dbReference type="FunFam" id="3.90.1260.10:FF:000007">
    <property type="entry name" value="Argininosuccinate synthase"/>
    <property type="match status" value="1"/>
</dbReference>
<dbReference type="Gene3D" id="3.90.1260.10">
    <property type="entry name" value="Argininosuccinate synthetase, chain A, domain 2"/>
    <property type="match status" value="1"/>
</dbReference>
<dbReference type="Gene3D" id="3.40.50.620">
    <property type="entry name" value="HUPs"/>
    <property type="match status" value="1"/>
</dbReference>
<dbReference type="Gene3D" id="1.20.5.470">
    <property type="entry name" value="Single helix bin"/>
    <property type="match status" value="1"/>
</dbReference>
<dbReference type="HAMAP" id="MF_00005">
    <property type="entry name" value="Arg_succ_synth_type1"/>
    <property type="match status" value="1"/>
</dbReference>
<dbReference type="InterPro" id="IPR048268">
    <property type="entry name" value="Arginosuc_syn_C"/>
</dbReference>
<dbReference type="InterPro" id="IPR048267">
    <property type="entry name" value="Arginosuc_syn_N"/>
</dbReference>
<dbReference type="InterPro" id="IPR001518">
    <property type="entry name" value="Arginosuc_synth"/>
</dbReference>
<dbReference type="InterPro" id="IPR018223">
    <property type="entry name" value="Arginosuc_synth_CS"/>
</dbReference>
<dbReference type="InterPro" id="IPR023434">
    <property type="entry name" value="Arginosuc_synth_type_1_subfam"/>
</dbReference>
<dbReference type="InterPro" id="IPR024074">
    <property type="entry name" value="AS_cat/multimer_dom_body"/>
</dbReference>
<dbReference type="InterPro" id="IPR014729">
    <property type="entry name" value="Rossmann-like_a/b/a_fold"/>
</dbReference>
<dbReference type="NCBIfam" id="TIGR00032">
    <property type="entry name" value="argG"/>
    <property type="match status" value="1"/>
</dbReference>
<dbReference type="NCBIfam" id="NF001770">
    <property type="entry name" value="PRK00509.1"/>
    <property type="match status" value="1"/>
</dbReference>
<dbReference type="PANTHER" id="PTHR11587">
    <property type="entry name" value="ARGININOSUCCINATE SYNTHASE"/>
    <property type="match status" value="1"/>
</dbReference>
<dbReference type="PANTHER" id="PTHR11587:SF2">
    <property type="entry name" value="ARGININOSUCCINATE SYNTHASE"/>
    <property type="match status" value="1"/>
</dbReference>
<dbReference type="Pfam" id="PF20979">
    <property type="entry name" value="Arginosuc_syn_C"/>
    <property type="match status" value="1"/>
</dbReference>
<dbReference type="Pfam" id="PF00764">
    <property type="entry name" value="Arginosuc_synth"/>
    <property type="match status" value="1"/>
</dbReference>
<dbReference type="SUPFAM" id="SSF52402">
    <property type="entry name" value="Adenine nucleotide alpha hydrolases-like"/>
    <property type="match status" value="1"/>
</dbReference>
<dbReference type="SUPFAM" id="SSF69864">
    <property type="entry name" value="Argininosuccinate synthetase, C-terminal domain"/>
    <property type="match status" value="1"/>
</dbReference>
<dbReference type="PROSITE" id="PS00564">
    <property type="entry name" value="ARGININOSUCCIN_SYN_1"/>
    <property type="match status" value="1"/>
</dbReference>
<dbReference type="PROSITE" id="PS00565">
    <property type="entry name" value="ARGININOSUCCIN_SYN_2"/>
    <property type="match status" value="1"/>
</dbReference>
<organism>
    <name type="scientific">Prochlorococcus marinus (strain NATL1A)</name>
    <dbReference type="NCBI Taxonomy" id="167555"/>
    <lineage>
        <taxon>Bacteria</taxon>
        <taxon>Bacillati</taxon>
        <taxon>Cyanobacteriota</taxon>
        <taxon>Cyanophyceae</taxon>
        <taxon>Synechococcales</taxon>
        <taxon>Prochlorococcaceae</taxon>
        <taxon>Prochlorococcus</taxon>
    </lineage>
</organism>
<feature type="chain" id="PRO_1000000418" description="Argininosuccinate synthase">
    <location>
        <begin position="1"/>
        <end position="400"/>
    </location>
</feature>
<feature type="binding site" evidence="1">
    <location>
        <begin position="10"/>
        <end position="18"/>
    </location>
    <ligand>
        <name>ATP</name>
        <dbReference type="ChEBI" id="CHEBI:30616"/>
    </ligand>
</feature>
<feature type="binding site" evidence="1">
    <location>
        <position position="38"/>
    </location>
    <ligand>
        <name>ATP</name>
        <dbReference type="ChEBI" id="CHEBI:30616"/>
    </ligand>
</feature>
<feature type="binding site" evidence="1">
    <location>
        <position position="89"/>
    </location>
    <ligand>
        <name>L-citrulline</name>
        <dbReference type="ChEBI" id="CHEBI:57743"/>
    </ligand>
</feature>
<feature type="binding site" evidence="1">
    <location>
        <position position="119"/>
    </location>
    <ligand>
        <name>ATP</name>
        <dbReference type="ChEBI" id="CHEBI:30616"/>
    </ligand>
</feature>
<feature type="binding site" evidence="1">
    <location>
        <position position="121"/>
    </location>
    <ligand>
        <name>L-aspartate</name>
        <dbReference type="ChEBI" id="CHEBI:29991"/>
    </ligand>
</feature>
<feature type="binding site" evidence="1">
    <location>
        <position position="125"/>
    </location>
    <ligand>
        <name>L-aspartate</name>
        <dbReference type="ChEBI" id="CHEBI:29991"/>
    </ligand>
</feature>
<feature type="binding site" evidence="1">
    <location>
        <position position="125"/>
    </location>
    <ligand>
        <name>L-citrulline</name>
        <dbReference type="ChEBI" id="CHEBI:57743"/>
    </ligand>
</feature>
<feature type="binding site" evidence="1">
    <location>
        <position position="126"/>
    </location>
    <ligand>
        <name>L-aspartate</name>
        <dbReference type="ChEBI" id="CHEBI:29991"/>
    </ligand>
</feature>
<feature type="binding site" evidence="1">
    <location>
        <position position="129"/>
    </location>
    <ligand>
        <name>L-citrulline</name>
        <dbReference type="ChEBI" id="CHEBI:57743"/>
    </ligand>
</feature>
<feature type="binding site" evidence="1">
    <location>
        <position position="177"/>
    </location>
    <ligand>
        <name>L-citrulline</name>
        <dbReference type="ChEBI" id="CHEBI:57743"/>
    </ligand>
</feature>
<feature type="binding site" evidence="1">
    <location>
        <position position="186"/>
    </location>
    <ligand>
        <name>L-citrulline</name>
        <dbReference type="ChEBI" id="CHEBI:57743"/>
    </ligand>
</feature>
<feature type="binding site" evidence="1">
    <location>
        <position position="262"/>
    </location>
    <ligand>
        <name>L-citrulline</name>
        <dbReference type="ChEBI" id="CHEBI:57743"/>
    </ligand>
</feature>
<feature type="binding site" evidence="1">
    <location>
        <position position="274"/>
    </location>
    <ligand>
        <name>L-citrulline</name>
        <dbReference type="ChEBI" id="CHEBI:57743"/>
    </ligand>
</feature>
<evidence type="ECO:0000255" key="1">
    <source>
        <dbReference type="HAMAP-Rule" id="MF_00005"/>
    </source>
</evidence>
<keyword id="KW-0028">Amino-acid biosynthesis</keyword>
<keyword id="KW-0055">Arginine biosynthesis</keyword>
<keyword id="KW-0067">ATP-binding</keyword>
<keyword id="KW-0963">Cytoplasm</keyword>
<keyword id="KW-0436">Ligase</keyword>
<keyword id="KW-0547">Nucleotide-binding</keyword>
<reference key="1">
    <citation type="journal article" date="2007" name="PLoS Genet.">
        <title>Patterns and implications of gene gain and loss in the evolution of Prochlorococcus.</title>
        <authorList>
            <person name="Kettler G.C."/>
            <person name="Martiny A.C."/>
            <person name="Huang K."/>
            <person name="Zucker J."/>
            <person name="Coleman M.L."/>
            <person name="Rodrigue S."/>
            <person name="Chen F."/>
            <person name="Lapidus A."/>
            <person name="Ferriera S."/>
            <person name="Johnson J."/>
            <person name="Steglich C."/>
            <person name="Church G.M."/>
            <person name="Richardson P."/>
            <person name="Chisholm S.W."/>
        </authorList>
    </citation>
    <scope>NUCLEOTIDE SEQUENCE [LARGE SCALE GENOMIC DNA]</scope>
    <source>
        <strain>NATL1A</strain>
    </source>
</reference>
<accession>A2C5I6</accession>